<comment type="function">
    <text evidence="2 4 10">Plays a critical role as a guanine nucleotide exchange factor (GEF) for CDC42 in several intracellular processes associated with the actin and microtubule cytoskeleton. Regulates the structure of apical junctions in epithelial cells (By similarity). Participates in the normal lumenogenesis of epithelial cell cysts by regulating spindle orientation (By similarity). Plays a role in ciliogenesis (By similarity). May play a role in membrane trafficking between the cell surface and the Golgi (PubMed:14506234).</text>
</comment>
<comment type="subunit">
    <text evidence="1 3 4 10">Binds DNM1 via its N-terminal SH3 domains (PubMed:14506234). The C-terminal SH3 domain binds a complex containing actin, tubulin, Hsp70 and actin-regulatory proteins, such as ENAH, EVL, WIRE, CR16, WAVE1 and NAP1L1 (By similarity). Interacts with FASLG. Interacts (via SH3 domain 6) with WASL. Interacts (via SH3 domain 6) interacts with ENAH. Interacts (via C-terminal domain) with TJP1; required for the apical cell-cell junction localization of DNMBP (By similarity).</text>
</comment>
<comment type="subcellular location">
    <subcellularLocation>
        <location evidence="4">Cytoplasm</location>
    </subcellularLocation>
    <subcellularLocation>
        <location evidence="3">Golgi apparatus</location>
        <location evidence="3">Golgi stack</location>
    </subcellularLocation>
    <subcellularLocation>
        <location evidence="3">Cytoplasm</location>
        <location evidence="3">Cytoskeleton</location>
    </subcellularLocation>
    <subcellularLocation>
        <location evidence="10">Synapse</location>
    </subcellularLocation>
    <subcellularLocation>
        <location evidence="4">Cell junction</location>
    </subcellularLocation>
    <text evidence="4">Localizes to the apical junction, colocalizes with TJP1.</text>
</comment>
<comment type="tissue specificity">
    <text evidence="11">Widely expressed.</text>
</comment>
<evidence type="ECO:0000250" key="1"/>
<evidence type="ECO:0000250" key="2">
    <source>
        <dbReference type="UniProtKB" id="E2RP94"/>
    </source>
</evidence>
<evidence type="ECO:0000250" key="3">
    <source>
        <dbReference type="UniProtKB" id="Q6TXD4"/>
    </source>
</evidence>
<evidence type="ECO:0000250" key="4">
    <source>
        <dbReference type="UniProtKB" id="Q6XZF7"/>
    </source>
</evidence>
<evidence type="ECO:0000255" key="5"/>
<evidence type="ECO:0000255" key="6">
    <source>
        <dbReference type="PROSITE-ProRule" id="PRU00062"/>
    </source>
</evidence>
<evidence type="ECO:0000255" key="7">
    <source>
        <dbReference type="PROSITE-ProRule" id="PRU00192"/>
    </source>
</evidence>
<evidence type="ECO:0000255" key="8">
    <source>
        <dbReference type="PROSITE-ProRule" id="PRU00361"/>
    </source>
</evidence>
<evidence type="ECO:0000256" key="9">
    <source>
        <dbReference type="SAM" id="MobiDB-lite"/>
    </source>
</evidence>
<evidence type="ECO:0000269" key="10">
    <source>
    </source>
</evidence>
<evidence type="ECO:0000269" key="11">
    <source>
    </source>
</evidence>
<evidence type="ECO:0000303" key="12">
    <source>
    </source>
</evidence>
<evidence type="ECO:0000305" key="13">
    <source>
    </source>
</evidence>
<evidence type="ECO:0000312" key="14">
    <source>
        <dbReference type="RGD" id="1583840"/>
    </source>
</evidence>
<dbReference type="EMBL" id="AC096315">
    <property type="status" value="NOT_ANNOTATED_CDS"/>
    <property type="molecule type" value="Genomic_DNA"/>
</dbReference>
<dbReference type="RefSeq" id="NP_001381930.1">
    <property type="nucleotide sequence ID" value="NM_001395001.1"/>
</dbReference>
<dbReference type="RefSeq" id="XP_006223824.1">
    <property type="nucleotide sequence ID" value="XM_006223762.3"/>
</dbReference>
<dbReference type="RefSeq" id="XP_006231632.1">
    <property type="nucleotide sequence ID" value="XM_006231570.3"/>
</dbReference>
<dbReference type="RefSeq" id="XP_038935990.1">
    <property type="nucleotide sequence ID" value="XM_039080062.2"/>
</dbReference>
<dbReference type="RefSeq" id="XP_038935994.1">
    <property type="nucleotide sequence ID" value="XM_039080066.2"/>
</dbReference>
<dbReference type="SMR" id="M0R4F8"/>
<dbReference type="FunCoup" id="M0R4F8">
    <property type="interactions" value="139"/>
</dbReference>
<dbReference type="STRING" id="10116.ENSRNOP00000064242"/>
<dbReference type="PhosphoSitePlus" id="M0R4F8"/>
<dbReference type="PaxDb" id="10116-ENSRNOP00000064242"/>
<dbReference type="GeneID" id="309362"/>
<dbReference type="AGR" id="RGD:1583840"/>
<dbReference type="RGD" id="1583840">
    <property type="gene designation" value="Dnmbp"/>
</dbReference>
<dbReference type="VEuPathDB" id="HostDB:ENSRNOG00000050742"/>
<dbReference type="eggNOG" id="KOG3519">
    <property type="taxonomic scope" value="Eukaryota"/>
</dbReference>
<dbReference type="eggNOG" id="KOG4225">
    <property type="taxonomic scope" value="Eukaryota"/>
</dbReference>
<dbReference type="HOGENOM" id="CLU_252350_0_0_1"/>
<dbReference type="InParanoid" id="M0R4F8"/>
<dbReference type="Reactome" id="R-RNO-9013148">
    <property type="pathway name" value="CDC42 GTPase cycle"/>
</dbReference>
<dbReference type="PRO" id="PR:M0R4F8"/>
<dbReference type="Proteomes" id="UP000002494">
    <property type="component" value="Chromosome 1"/>
</dbReference>
<dbReference type="Bgee" id="ENSRNOG00000050742">
    <property type="expression patterns" value="Expressed in jejunum and 19 other cell types or tissues"/>
</dbReference>
<dbReference type="GO" id="GO:0005911">
    <property type="term" value="C:cell-cell junction"/>
    <property type="evidence" value="ECO:0000250"/>
    <property type="project" value="UniProtKB"/>
</dbReference>
<dbReference type="GO" id="GO:0005737">
    <property type="term" value="C:cytoplasm"/>
    <property type="evidence" value="ECO:0000318"/>
    <property type="project" value="GO_Central"/>
</dbReference>
<dbReference type="GO" id="GO:0005856">
    <property type="term" value="C:cytoskeleton"/>
    <property type="evidence" value="ECO:0007669"/>
    <property type="project" value="UniProtKB-SubCell"/>
</dbReference>
<dbReference type="GO" id="GO:0005794">
    <property type="term" value="C:Golgi apparatus"/>
    <property type="evidence" value="ECO:0000314"/>
    <property type="project" value="UniProtKB"/>
</dbReference>
<dbReference type="GO" id="GO:0005795">
    <property type="term" value="C:Golgi stack"/>
    <property type="evidence" value="ECO:0007669"/>
    <property type="project" value="UniProtKB-SubCell"/>
</dbReference>
<dbReference type="GO" id="GO:0098793">
    <property type="term" value="C:presynapse"/>
    <property type="evidence" value="ECO:0000314"/>
    <property type="project" value="UniProtKB"/>
</dbReference>
<dbReference type="GO" id="GO:0045202">
    <property type="term" value="C:synapse"/>
    <property type="evidence" value="ECO:0000314"/>
    <property type="project" value="UniProtKB"/>
</dbReference>
<dbReference type="GO" id="GO:0008021">
    <property type="term" value="C:synaptic vesicle"/>
    <property type="evidence" value="ECO:0000314"/>
    <property type="project" value="SynGO"/>
</dbReference>
<dbReference type="GO" id="GO:0005085">
    <property type="term" value="F:guanyl-nucleotide exchange factor activity"/>
    <property type="evidence" value="ECO:0000250"/>
    <property type="project" value="UniProtKB"/>
</dbReference>
<dbReference type="GO" id="GO:0060271">
    <property type="term" value="P:cilium assembly"/>
    <property type="evidence" value="ECO:0000266"/>
    <property type="project" value="RGD"/>
</dbReference>
<dbReference type="GO" id="GO:0035556">
    <property type="term" value="P:intracellular signal transduction"/>
    <property type="evidence" value="ECO:0007669"/>
    <property type="project" value="InterPro"/>
</dbReference>
<dbReference type="GO" id="GO:0008360">
    <property type="term" value="P:regulation of cell shape"/>
    <property type="evidence" value="ECO:0000250"/>
    <property type="project" value="UniProtKB"/>
</dbReference>
<dbReference type="CDD" id="cd07589">
    <property type="entry name" value="BAR_DNMBP"/>
    <property type="match status" value="1"/>
</dbReference>
<dbReference type="CDD" id="cd00160">
    <property type="entry name" value="RhoGEF"/>
    <property type="match status" value="1"/>
</dbReference>
<dbReference type="CDD" id="cd11798">
    <property type="entry name" value="SH3_DNMBP_C1"/>
    <property type="match status" value="1"/>
</dbReference>
<dbReference type="CDD" id="cd12141">
    <property type="entry name" value="SH3_DNMBP_C2"/>
    <property type="match status" value="1"/>
</dbReference>
<dbReference type="CDD" id="cd11794">
    <property type="entry name" value="SH3_DNMBP_N1"/>
    <property type="match status" value="1"/>
</dbReference>
<dbReference type="CDD" id="cd11795">
    <property type="entry name" value="SH3_DNMBP_N2"/>
    <property type="match status" value="1"/>
</dbReference>
<dbReference type="CDD" id="cd11796">
    <property type="entry name" value="SH3_DNMBP_N3"/>
    <property type="match status" value="1"/>
</dbReference>
<dbReference type="FunFam" id="1.20.1270.60:FF:000027">
    <property type="entry name" value="dynamin-binding protein isoform X1"/>
    <property type="match status" value="1"/>
</dbReference>
<dbReference type="FunFam" id="2.30.30.40:FF:000066">
    <property type="entry name" value="dynamin-binding protein isoform X1"/>
    <property type="match status" value="1"/>
</dbReference>
<dbReference type="FunFam" id="2.30.30.40:FF:000084">
    <property type="entry name" value="dynamin-binding protein isoform X1"/>
    <property type="match status" value="1"/>
</dbReference>
<dbReference type="FunFam" id="2.30.30.40:FF:000120">
    <property type="entry name" value="dynamin-binding protein isoform X1"/>
    <property type="match status" value="1"/>
</dbReference>
<dbReference type="FunFam" id="2.30.30.40:FF:000138">
    <property type="entry name" value="dynamin-binding protein isoform X1"/>
    <property type="match status" value="1"/>
</dbReference>
<dbReference type="FunFam" id="2.30.30.40:FF:000160">
    <property type="entry name" value="dynamin-binding protein isoform X1"/>
    <property type="match status" value="1"/>
</dbReference>
<dbReference type="FunFam" id="2.30.30.40:FF:000165">
    <property type="entry name" value="dynamin-binding protein isoform X1"/>
    <property type="match status" value="1"/>
</dbReference>
<dbReference type="FunFam" id="1.20.900.10:FF:000023">
    <property type="entry name" value="dynamin-binding protein isoform X2"/>
    <property type="match status" value="1"/>
</dbReference>
<dbReference type="Gene3D" id="1.20.1270.60">
    <property type="entry name" value="Arfaptin homology (AH) domain/BAR domain"/>
    <property type="match status" value="1"/>
</dbReference>
<dbReference type="Gene3D" id="1.20.900.10">
    <property type="entry name" value="Dbl homology (DH) domain"/>
    <property type="match status" value="1"/>
</dbReference>
<dbReference type="Gene3D" id="2.30.30.40">
    <property type="entry name" value="SH3 Domains"/>
    <property type="match status" value="6"/>
</dbReference>
<dbReference type="InterPro" id="IPR027267">
    <property type="entry name" value="AH/BAR_dom_sf"/>
</dbReference>
<dbReference type="InterPro" id="IPR004148">
    <property type="entry name" value="BAR_dom"/>
</dbReference>
<dbReference type="InterPro" id="IPR035899">
    <property type="entry name" value="DBL_dom_sf"/>
</dbReference>
<dbReference type="InterPro" id="IPR000219">
    <property type="entry name" value="DH_dom"/>
</dbReference>
<dbReference type="InterPro" id="IPR035820">
    <property type="entry name" value="DNMBP_SH3_C1"/>
</dbReference>
<dbReference type="InterPro" id="IPR035817">
    <property type="entry name" value="DNMBP_SH3_N1"/>
</dbReference>
<dbReference type="InterPro" id="IPR035818">
    <property type="entry name" value="DNMBP_SH3_N2"/>
</dbReference>
<dbReference type="InterPro" id="IPR035819">
    <property type="entry name" value="DNMBP_SH3_N3"/>
</dbReference>
<dbReference type="InterPro" id="IPR051492">
    <property type="entry name" value="Dynamin-Rho_GEF"/>
</dbReference>
<dbReference type="InterPro" id="IPR001331">
    <property type="entry name" value="GDS_CDC24_CS"/>
</dbReference>
<dbReference type="InterPro" id="IPR036028">
    <property type="entry name" value="SH3-like_dom_sf"/>
</dbReference>
<dbReference type="InterPro" id="IPR001452">
    <property type="entry name" value="SH3_domain"/>
</dbReference>
<dbReference type="PANTHER" id="PTHR22834:SF19">
    <property type="entry name" value="DYNAMIN-BINDING PROTEIN"/>
    <property type="match status" value="1"/>
</dbReference>
<dbReference type="PANTHER" id="PTHR22834">
    <property type="entry name" value="NUCLEAR FUSION PROTEIN FUS2"/>
    <property type="match status" value="1"/>
</dbReference>
<dbReference type="Pfam" id="PF03114">
    <property type="entry name" value="BAR"/>
    <property type="match status" value="1"/>
</dbReference>
<dbReference type="Pfam" id="PF00621">
    <property type="entry name" value="RhoGEF"/>
    <property type="match status" value="1"/>
</dbReference>
<dbReference type="Pfam" id="PF00018">
    <property type="entry name" value="SH3_1"/>
    <property type="match status" value="2"/>
</dbReference>
<dbReference type="Pfam" id="PF07653">
    <property type="entry name" value="SH3_2"/>
    <property type="match status" value="1"/>
</dbReference>
<dbReference type="Pfam" id="PF14604">
    <property type="entry name" value="SH3_9"/>
    <property type="match status" value="2"/>
</dbReference>
<dbReference type="PRINTS" id="PR00499">
    <property type="entry name" value="P67PHOX"/>
</dbReference>
<dbReference type="SMART" id="SM00721">
    <property type="entry name" value="BAR"/>
    <property type="match status" value="1"/>
</dbReference>
<dbReference type="SMART" id="SM00325">
    <property type="entry name" value="RhoGEF"/>
    <property type="match status" value="1"/>
</dbReference>
<dbReference type="SMART" id="SM00326">
    <property type="entry name" value="SH3"/>
    <property type="match status" value="6"/>
</dbReference>
<dbReference type="SUPFAM" id="SSF103657">
    <property type="entry name" value="BAR/IMD domain-like"/>
    <property type="match status" value="1"/>
</dbReference>
<dbReference type="SUPFAM" id="SSF48065">
    <property type="entry name" value="DBL homology domain (DH-domain)"/>
    <property type="match status" value="1"/>
</dbReference>
<dbReference type="SUPFAM" id="SSF50044">
    <property type="entry name" value="SH3-domain"/>
    <property type="match status" value="6"/>
</dbReference>
<dbReference type="PROSITE" id="PS51021">
    <property type="entry name" value="BAR"/>
    <property type="match status" value="1"/>
</dbReference>
<dbReference type="PROSITE" id="PS00741">
    <property type="entry name" value="DH_1"/>
    <property type="match status" value="1"/>
</dbReference>
<dbReference type="PROSITE" id="PS50010">
    <property type="entry name" value="DH_2"/>
    <property type="match status" value="1"/>
</dbReference>
<dbReference type="PROSITE" id="PS50002">
    <property type="entry name" value="SH3"/>
    <property type="match status" value="6"/>
</dbReference>
<organism>
    <name type="scientific">Rattus norvegicus</name>
    <name type="common">Rat</name>
    <dbReference type="NCBI Taxonomy" id="10116"/>
    <lineage>
        <taxon>Eukaryota</taxon>
        <taxon>Metazoa</taxon>
        <taxon>Chordata</taxon>
        <taxon>Craniata</taxon>
        <taxon>Vertebrata</taxon>
        <taxon>Euteleostomi</taxon>
        <taxon>Mammalia</taxon>
        <taxon>Eutheria</taxon>
        <taxon>Euarchontoglires</taxon>
        <taxon>Glires</taxon>
        <taxon>Rodentia</taxon>
        <taxon>Myomorpha</taxon>
        <taxon>Muroidea</taxon>
        <taxon>Muridae</taxon>
        <taxon>Murinae</taxon>
        <taxon>Rattus</taxon>
    </lineage>
</organism>
<gene>
    <name evidence="14" type="primary">Dnmbp</name>
    <name evidence="12" type="synonym">Tuba</name>
</gene>
<name>DNMBP_RAT</name>
<sequence>MEPGSVVRAIFDFCPSVSEELPLFVGDVIEVLTVVDEFWLLGKKEDVTGQFPSSFVEIVTIPSLKEGERLFVCTCDFISREPNSLSLHRGDLVIIDGTPTAGWLQGRSSLGARGFFPSSCIHELCLSSQSRQWHSQNMLLQVPEYSMGQARALMGLSAQLDEELDFREGDVITIIGVPEPGWFEGELEGRRGIFPEGFVELLGPLRTADESVNAGSGDDSTLNDEVDVSPEEVESEGDEDDQQAGTYGIALYRFQALESNELDFEVGDKIRILGTLEDGWLEGRLKGKTGIFPHRFVKLCPSNRSEETMALPQGDSFPKNSESSAGEMGDSVVEEARQDPQECEEETPDSGLPEQTSEEPLDHVAPECVVDKISGQDEDASGSSPDVDLEGPRAEDPSTPDLSQEVNGISSLPPQVPLQPEEEKSQHYLTAGGSRQCPDTFSKLFPLEAKTRNYSSLPPRRTYTQGWSLQKPAPHLHRASSLTASRVNRPGHFSHTAMASCAQKHQTSAENAASLCCAPERPKRRPGLPDKEPATEITPASQGDNLDLDSKLTQQLIEFEKSLSGPSTEPKKIVRRFSIMDFYSEKDIVRGSSNSLPSRNFPERRKALRPPPPRPHTPTSTSPHLLVDQSPKPGPPLVVRPSRPAPLPPPTQQRLNTASPKPTSCALPGWEAPEKEGSEYTEKSPAQLFPCPSVLARIQDVEHDLDMHTRAQEELNLLLEEKQDESLRAETLETLKSYESTIQSLNLELQQLREMTLLSSQSSSLAAPSGSVSTEKPEQRMLEKRAKVVAELLQTEKDYIRDLEMCVERVMVPLQQAQVPNIDFEGLFGNMQTVIKVSKQLLAALEITDAVGPVFLDHRDELEGTYRLYCQNHDEAISLLDIYEKDERIQKHLQDYLADLKSLYHEWGCTNYINLGSFLIKPVQRIMRYPLLLMELLNSTPESHPDKAPLTSAVLAIKEINANINEYKRRKDLVLKYRKADEDSLMEKISKLNIHSIIKKSSRVSSHLKHLTGFAPQLKDEAFEETEKNFRMQERLIKSFIRDLSLYLQHIRESACVKVVAAMSIWDLCMERGHHDLEQFEKVHRYISDQLFTRFKERTERLVINPLNQLLNMFTGPYKLVQKRFDKLLDFYNCTERAEKLKDKKTLEDLQSARNNYEALNSQLLDELPKFQQYAQSLFTNCIHGYAEAHCDFVQKALEQLQPLLSLLKASDREGNLIAIFHEEHSRVLQQLQVFTFFPEALPAPRKPFERKTTDRQSSRKALLGMPSYMLQSEELRSSLLARYPPEKLFHVQRNFNAAQDLDVSLLEGDLVGVIKKKDPMGSQNRWLVDNGVTKGFVYSSFLKPYNPRCSHSDSSVVSHSSTESEHSGSSPSFHRQNSSSALTFNSNSMTVSFTSGLPQKQPQDTSPLRECVPETLGVSSNTGNPETGPSPCPSDPGFSCQRRPGNPADGTREISQPASTLRGCQRRSLHSEVLGYPVPGRSDQGSDSIKGTSRACQTAGDRDRGLGSSEAEGNQVYFAIYTFKARNPNELTVLANQRLRILEFKDVTGNTEWWLAEVNGKKGYVPSNYIRKTEYT</sequence>
<accession>M0R4F8</accession>
<reference key="1">
    <citation type="journal article" date="2004" name="Nature">
        <title>Genome sequence of the Brown Norway rat yields insights into mammalian evolution.</title>
        <authorList>
            <person name="Gibbs R.A."/>
            <person name="Weinstock G.M."/>
            <person name="Metzker M.L."/>
            <person name="Muzny D.M."/>
            <person name="Sodergren E.J."/>
            <person name="Scherer S."/>
            <person name="Scott G."/>
            <person name="Steffen D."/>
            <person name="Worley K.C."/>
            <person name="Burch P.E."/>
            <person name="Okwuonu G."/>
            <person name="Hines S."/>
            <person name="Lewis L."/>
            <person name="Deramo C."/>
            <person name="Delgado O."/>
            <person name="Dugan-Rocha S."/>
            <person name="Miner G."/>
            <person name="Morgan M."/>
            <person name="Hawes A."/>
            <person name="Gill R."/>
            <person name="Holt R.A."/>
            <person name="Adams M.D."/>
            <person name="Amanatides P.G."/>
            <person name="Baden-Tillson H."/>
            <person name="Barnstead M."/>
            <person name="Chin S."/>
            <person name="Evans C.A."/>
            <person name="Ferriera S."/>
            <person name="Fosler C."/>
            <person name="Glodek A."/>
            <person name="Gu Z."/>
            <person name="Jennings D."/>
            <person name="Kraft C.L."/>
            <person name="Nguyen T."/>
            <person name="Pfannkoch C.M."/>
            <person name="Sitter C."/>
            <person name="Sutton G.G."/>
            <person name="Venter J.C."/>
            <person name="Woodage T."/>
            <person name="Smith D."/>
            <person name="Lee H.-M."/>
            <person name="Gustafson E."/>
            <person name="Cahill P."/>
            <person name="Kana A."/>
            <person name="Doucette-Stamm L."/>
            <person name="Weinstock K."/>
            <person name="Fechtel K."/>
            <person name="Weiss R.B."/>
            <person name="Dunn D.M."/>
            <person name="Green E.D."/>
            <person name="Blakesley R.W."/>
            <person name="Bouffard G.G."/>
            <person name="De Jong P.J."/>
            <person name="Osoegawa K."/>
            <person name="Zhu B."/>
            <person name="Marra M."/>
            <person name="Schein J."/>
            <person name="Bosdet I."/>
            <person name="Fjell C."/>
            <person name="Jones S."/>
            <person name="Krzywinski M."/>
            <person name="Mathewson C."/>
            <person name="Siddiqui A."/>
            <person name="Wye N."/>
            <person name="McPherson J."/>
            <person name="Zhao S."/>
            <person name="Fraser C.M."/>
            <person name="Shetty J."/>
            <person name="Shatsman S."/>
            <person name="Geer K."/>
            <person name="Chen Y."/>
            <person name="Abramzon S."/>
            <person name="Nierman W.C."/>
            <person name="Havlak P.H."/>
            <person name="Chen R."/>
            <person name="Durbin K.J."/>
            <person name="Egan A."/>
            <person name="Ren Y."/>
            <person name="Song X.-Z."/>
            <person name="Li B."/>
            <person name="Liu Y."/>
            <person name="Qin X."/>
            <person name="Cawley S."/>
            <person name="Cooney A.J."/>
            <person name="D'Souza L.M."/>
            <person name="Martin K."/>
            <person name="Wu J.Q."/>
            <person name="Gonzalez-Garay M.L."/>
            <person name="Jackson A.R."/>
            <person name="Kalafus K.J."/>
            <person name="McLeod M.P."/>
            <person name="Milosavljevic A."/>
            <person name="Virk D."/>
            <person name="Volkov A."/>
            <person name="Wheeler D.A."/>
            <person name="Zhang Z."/>
            <person name="Bailey J.A."/>
            <person name="Eichler E.E."/>
            <person name="Tuzun E."/>
            <person name="Birney E."/>
            <person name="Mongin E."/>
            <person name="Ureta-Vidal A."/>
            <person name="Woodwark C."/>
            <person name="Zdobnov E."/>
            <person name="Bork P."/>
            <person name="Suyama M."/>
            <person name="Torrents D."/>
            <person name="Alexandersson M."/>
            <person name="Trask B.J."/>
            <person name="Young J.M."/>
            <person name="Huang H."/>
            <person name="Wang H."/>
            <person name="Xing H."/>
            <person name="Daniels S."/>
            <person name="Gietzen D."/>
            <person name="Schmidt J."/>
            <person name="Stevens K."/>
            <person name="Vitt U."/>
            <person name="Wingrove J."/>
            <person name="Camara F."/>
            <person name="Mar Alba M."/>
            <person name="Abril J.F."/>
            <person name="Guigo R."/>
            <person name="Smit A."/>
            <person name="Dubchak I."/>
            <person name="Rubin E.M."/>
            <person name="Couronne O."/>
            <person name="Poliakov A."/>
            <person name="Huebner N."/>
            <person name="Ganten D."/>
            <person name="Goesele C."/>
            <person name="Hummel O."/>
            <person name="Kreitler T."/>
            <person name="Lee Y.-A."/>
            <person name="Monti J."/>
            <person name="Schulz H."/>
            <person name="Zimdahl H."/>
            <person name="Himmelbauer H."/>
            <person name="Lehrach H."/>
            <person name="Jacob H.J."/>
            <person name="Bromberg S."/>
            <person name="Gullings-Handley J."/>
            <person name="Jensen-Seaman M.I."/>
            <person name="Kwitek A.E."/>
            <person name="Lazar J."/>
            <person name="Pasko D."/>
            <person name="Tonellato P.J."/>
            <person name="Twigger S."/>
            <person name="Ponting C.P."/>
            <person name="Duarte J.M."/>
            <person name="Rice S."/>
            <person name="Goodstadt L."/>
            <person name="Beatson S.A."/>
            <person name="Emes R.D."/>
            <person name="Winter E.E."/>
            <person name="Webber C."/>
            <person name="Brandt P."/>
            <person name="Nyakatura G."/>
            <person name="Adetobi M."/>
            <person name="Chiaromonte F."/>
            <person name="Elnitski L."/>
            <person name="Eswara P."/>
            <person name="Hardison R.C."/>
            <person name="Hou M."/>
            <person name="Kolbe D."/>
            <person name="Makova K."/>
            <person name="Miller W."/>
            <person name="Nekrutenko A."/>
            <person name="Riemer C."/>
            <person name="Schwartz S."/>
            <person name="Taylor J."/>
            <person name="Yang S."/>
            <person name="Zhang Y."/>
            <person name="Lindpaintner K."/>
            <person name="Andrews T.D."/>
            <person name="Caccamo M."/>
            <person name="Clamp M."/>
            <person name="Clarke L."/>
            <person name="Curwen V."/>
            <person name="Durbin R.M."/>
            <person name="Eyras E."/>
            <person name="Searle S.M."/>
            <person name="Cooper G.M."/>
            <person name="Batzoglou S."/>
            <person name="Brudno M."/>
            <person name="Sidow A."/>
            <person name="Stone E.A."/>
            <person name="Payseur B.A."/>
            <person name="Bourque G."/>
            <person name="Lopez-Otin C."/>
            <person name="Puente X.S."/>
            <person name="Chakrabarti K."/>
            <person name="Chatterji S."/>
            <person name="Dewey C."/>
            <person name="Pachter L."/>
            <person name="Bray N."/>
            <person name="Yap V.B."/>
            <person name="Caspi A."/>
            <person name="Tesler G."/>
            <person name="Pevzner P.A."/>
            <person name="Haussler D."/>
            <person name="Roskin K.M."/>
            <person name="Baertsch R."/>
            <person name="Clawson H."/>
            <person name="Furey T.S."/>
            <person name="Hinrichs A.S."/>
            <person name="Karolchik D."/>
            <person name="Kent W.J."/>
            <person name="Rosenbloom K.R."/>
            <person name="Trumbower H."/>
            <person name="Weirauch M."/>
            <person name="Cooper D.N."/>
            <person name="Stenson P.D."/>
            <person name="Ma B."/>
            <person name="Brent M."/>
            <person name="Arumugam M."/>
            <person name="Shteynberg D."/>
            <person name="Copley R.R."/>
            <person name="Taylor M.S."/>
            <person name="Riethman H."/>
            <person name="Mudunuri U."/>
            <person name="Peterson J."/>
            <person name="Guyer M."/>
            <person name="Felsenfeld A."/>
            <person name="Old S."/>
            <person name="Mockrin S."/>
            <person name="Collins F.S."/>
        </authorList>
    </citation>
    <scope>NUCLEOTIDE SEQUENCE [LARGE SCALE GENOMIC DNA]</scope>
    <source>
        <strain>Brown Norway</strain>
    </source>
</reference>
<reference key="2">
    <citation type="journal article" date="2003" name="J. Biol. Chem.">
        <title>Tuba, a novel protein containing bin/amphiphysin/Rvs and Dbl homology domains, links dynamin to regulation of the actin cytoskeleton.</title>
        <authorList>
            <person name="Salazar M.A."/>
            <person name="Kwiatkowski A.V."/>
            <person name="Pellegrini L."/>
            <person name="Cestra G."/>
            <person name="Butler M.H."/>
            <person name="Rossman K.L."/>
            <person name="Serna D.M."/>
            <person name="Sondek J."/>
            <person name="Gertler F.B."/>
            <person name="De Camilli P."/>
        </authorList>
    </citation>
    <scope>SUBCELLULAR LOCATION</scope>
    <scope>TISSUE SPECIFICITY</scope>
    <scope>INTERACTION WITH DNM1</scope>
</reference>
<proteinExistence type="evidence at protein level"/>
<feature type="chain" id="PRO_0000446666" description="Dynamin-binding protein">
    <location>
        <begin position="1"/>
        <end position="1577"/>
    </location>
</feature>
<feature type="domain" description="SH3 1" evidence="7">
    <location>
        <begin position="2"/>
        <end position="61"/>
    </location>
</feature>
<feature type="domain" description="SH3 2" evidence="7">
    <location>
        <begin position="66"/>
        <end position="126"/>
    </location>
</feature>
<feature type="domain" description="SH3 3" evidence="7">
    <location>
        <begin position="145"/>
        <end position="204"/>
    </location>
</feature>
<feature type="domain" description="SH3 4" evidence="7">
    <location>
        <begin position="243"/>
        <end position="302"/>
    </location>
</feature>
<feature type="domain" description="DH" evidence="6">
    <location>
        <begin position="784"/>
        <end position="967"/>
    </location>
</feature>
<feature type="domain" description="BAR" evidence="8">
    <location>
        <begin position="1008"/>
        <end position="1217"/>
    </location>
</feature>
<feature type="domain" description="SH3 5" evidence="7">
    <location>
        <begin position="1285"/>
        <end position="1348"/>
    </location>
</feature>
<feature type="domain" description="SH3 6" evidence="7">
    <location>
        <begin position="1513"/>
        <end position="1576"/>
    </location>
</feature>
<feature type="region of interest" description="Disordered" evidence="9">
    <location>
        <begin position="209"/>
        <end position="242"/>
    </location>
</feature>
<feature type="region of interest" description="Disordered" evidence="9">
    <location>
        <begin position="307"/>
        <end position="361"/>
    </location>
</feature>
<feature type="region of interest" description="Disordered" evidence="9">
    <location>
        <begin position="375"/>
        <end position="437"/>
    </location>
</feature>
<feature type="region of interest" description="Disordered" evidence="9">
    <location>
        <begin position="519"/>
        <end position="547"/>
    </location>
</feature>
<feature type="region of interest" description="Disordered" evidence="9">
    <location>
        <begin position="590"/>
        <end position="681"/>
    </location>
</feature>
<feature type="region of interest" description="Disordered" evidence="9">
    <location>
        <begin position="1353"/>
        <end position="1381"/>
    </location>
</feature>
<feature type="region of interest" description="Disordered" evidence="9">
    <location>
        <begin position="1415"/>
        <end position="1510"/>
    </location>
</feature>
<feature type="coiled-coil region" evidence="5">
    <location>
        <begin position="705"/>
        <end position="755"/>
    </location>
</feature>
<feature type="compositionally biased region" description="Acidic residues" evidence="9">
    <location>
        <begin position="221"/>
        <end position="242"/>
    </location>
</feature>
<feature type="compositionally biased region" description="Polar residues" evidence="9">
    <location>
        <begin position="400"/>
        <end position="410"/>
    </location>
</feature>
<feature type="compositionally biased region" description="Low complexity" evidence="9">
    <location>
        <begin position="617"/>
        <end position="626"/>
    </location>
</feature>
<feature type="compositionally biased region" description="Pro residues" evidence="9">
    <location>
        <begin position="632"/>
        <end position="651"/>
    </location>
</feature>
<feature type="compositionally biased region" description="Polar residues" evidence="9">
    <location>
        <begin position="652"/>
        <end position="662"/>
    </location>
</feature>
<feature type="compositionally biased region" description="Basic and acidic residues" evidence="9">
    <location>
        <begin position="672"/>
        <end position="681"/>
    </location>
</feature>
<feature type="compositionally biased region" description="Low complexity" evidence="9">
    <location>
        <begin position="1353"/>
        <end position="1375"/>
    </location>
</feature>
<feature type="compositionally biased region" description="Polar residues" evidence="9">
    <location>
        <begin position="1418"/>
        <end position="1428"/>
    </location>
</feature>
<feature type="compositionally biased region" description="Polar residues" evidence="9">
    <location>
        <begin position="1484"/>
        <end position="1497"/>
    </location>
</feature>
<feature type="modified residue" description="N-acetylmethionine" evidence="4">
    <location>
        <position position="1"/>
    </location>
</feature>
<feature type="modified residue" description="Phosphoserine" evidence="4">
    <location>
        <position position="494"/>
    </location>
</feature>
<feature type="modified residue" description="Phosphoserine" evidence="4">
    <location>
        <position position="684"/>
    </location>
</feature>
<protein>
    <recommendedName>
        <fullName evidence="4">Dynamin-binding protein</fullName>
    </recommendedName>
    <alternativeName>
        <fullName evidence="13">Scaffold protein Tuba</fullName>
    </alternativeName>
</protein>
<keyword id="KW-0007">Acetylation</keyword>
<keyword id="KW-0965">Cell junction</keyword>
<keyword id="KW-0175">Coiled coil</keyword>
<keyword id="KW-0963">Cytoplasm</keyword>
<keyword id="KW-0206">Cytoskeleton</keyword>
<keyword id="KW-0333">Golgi apparatus</keyword>
<keyword id="KW-0344">Guanine-nucleotide releasing factor</keyword>
<keyword id="KW-0597">Phosphoprotein</keyword>
<keyword id="KW-1185">Reference proteome</keyword>
<keyword id="KW-0677">Repeat</keyword>
<keyword id="KW-0728">SH3 domain</keyword>
<keyword id="KW-0770">Synapse</keyword>